<protein>
    <recommendedName>
        <fullName evidence="2">Cytosolic Fe-S cluster assembly factor Nubp2 homolog</fullName>
    </recommendedName>
</protein>
<keyword id="KW-0004">4Fe-4S</keyword>
<keyword id="KW-0067">ATP-binding</keyword>
<keyword id="KW-0963">Cytoplasm</keyword>
<keyword id="KW-0408">Iron</keyword>
<keyword id="KW-0411">Iron-sulfur</keyword>
<keyword id="KW-0479">Metal-binding</keyword>
<keyword id="KW-0547">Nucleotide-binding</keyword>
<keyword id="KW-1185">Reference proteome</keyword>
<reference key="1">
    <citation type="journal article" date="2007" name="Nature">
        <title>Evolution of genes and genomes on the Drosophila phylogeny.</title>
        <authorList>
            <consortium name="Drosophila 12 genomes consortium"/>
        </authorList>
    </citation>
    <scope>NUCLEOTIDE SEQUENCE [LARGE SCALE GENOMIC DNA]</scope>
    <source>
        <strain>Tucson 15287-2541.00</strain>
    </source>
</reference>
<sequence>MLDKVKNVIVVLSGKGGVGKSTVSTQLALALRATGHKVGLLDIDLCGPSVPYLLGLEGRDIFQCDDGWVPIYTDESKTLAVMSIGFLLKNRTDPVIWRGPKKTMMIKQFLSDVKWDELDYLIIDTPPGTSDEHITVMECLREVPCNGAIIVTTPQGVALDDVRKEITFCKKTGIKLLGIVENMSGFVCPHCTECTNIFSSNGGAELANLAQVPHLGTLPIDPRVGVLAGSTASALDELPDSSTAQILRGIVQHLDALTAVPAIA</sequence>
<name>NUBP2_DROGR</name>
<gene>
    <name evidence="1" type="primary">Nubp2</name>
    <name type="ORF">GH14587</name>
</gene>
<evidence type="ECO:0000250" key="1">
    <source>
        <dbReference type="UniProtKB" id="Q9VPD2"/>
    </source>
</evidence>
<evidence type="ECO:0000255" key="2">
    <source>
        <dbReference type="HAMAP-Rule" id="MF_03039"/>
    </source>
</evidence>
<feature type="chain" id="PRO_0000382710" description="Cytosolic Fe-S cluster assembly factor Nubp2 homolog">
    <location>
        <begin position="1"/>
        <end position="264"/>
    </location>
</feature>
<feature type="binding site" evidence="2">
    <location>
        <begin position="14"/>
        <end position="21"/>
    </location>
    <ligand>
        <name>ATP</name>
        <dbReference type="ChEBI" id="CHEBI:30616"/>
    </ligand>
</feature>
<feature type="binding site" evidence="2">
    <location>
        <position position="188"/>
    </location>
    <ligand>
        <name>[4Fe-4S] cluster</name>
        <dbReference type="ChEBI" id="CHEBI:49883"/>
        <note>ligand shared between dimeric partners</note>
    </ligand>
</feature>
<feature type="binding site" evidence="2">
    <location>
        <position position="191"/>
    </location>
    <ligand>
        <name>[4Fe-4S] cluster</name>
        <dbReference type="ChEBI" id="CHEBI:49883"/>
        <note>ligand shared between dimeric partners</note>
    </ligand>
</feature>
<comment type="function">
    <text evidence="2">Component of the cytosolic iron-sulfur (Fe/S) protein assembly (CIA) machinery. Required for maturation of extramitochondrial Fe-S proteins. The Nubp1-Nubp2 heterotetramer forms a Fe-S scaffold complex, mediating the de novo assembly of an Fe-S cluster and its transfer to target apoproteins.</text>
</comment>
<comment type="cofactor">
    <cofactor evidence="2">
        <name>[4Fe-4S] cluster</name>
        <dbReference type="ChEBI" id="CHEBI:49883"/>
    </cofactor>
    <text evidence="2">Binds 4 [4Fe-4S] clusters per heterotetramer. Contains two stable clusters in the N-termini of Nubp1 and two labile, bridging clusters between subunits of the Nubp1-Nubp2 heterotetramer.</text>
</comment>
<comment type="subunit">
    <text evidence="2">Heterotetramer of 2 Nubp1 and 2 Nubp2 chains.</text>
</comment>
<comment type="subcellular location">
    <subcellularLocation>
        <location evidence="2">Cytoplasm</location>
    </subcellularLocation>
</comment>
<comment type="similarity">
    <text evidence="2">Belongs to the Mrp/NBP35 ATP-binding proteins family. NUBP2/CFD1 subfamily.</text>
</comment>
<dbReference type="EMBL" id="CH916366">
    <property type="protein sequence ID" value="EDV97641.1"/>
    <property type="molecule type" value="Genomic_DNA"/>
</dbReference>
<dbReference type="SMR" id="B4IYG8"/>
<dbReference type="FunCoup" id="B4IYG8">
    <property type="interactions" value="251"/>
</dbReference>
<dbReference type="STRING" id="7222.B4IYG8"/>
<dbReference type="EnsemblMetazoa" id="FBtr0150001">
    <property type="protein sequence ID" value="FBpp0148493"/>
    <property type="gene ID" value="FBgn0122063"/>
</dbReference>
<dbReference type="EnsemblMetazoa" id="XM_001985257.2">
    <property type="protein sequence ID" value="XP_001985293.1"/>
    <property type="gene ID" value="LOC6557614"/>
</dbReference>
<dbReference type="GeneID" id="6557614"/>
<dbReference type="KEGG" id="dgr:6557614"/>
<dbReference type="CTD" id="10101"/>
<dbReference type="eggNOG" id="KOG3022">
    <property type="taxonomic scope" value="Eukaryota"/>
</dbReference>
<dbReference type="HOGENOM" id="CLU_024839_0_1_1"/>
<dbReference type="InParanoid" id="B4IYG8"/>
<dbReference type="OMA" id="WIPVFAD"/>
<dbReference type="OrthoDB" id="1741334at2759"/>
<dbReference type="PhylomeDB" id="B4IYG8"/>
<dbReference type="Proteomes" id="UP000001070">
    <property type="component" value="Unassembled WGS sequence"/>
</dbReference>
<dbReference type="GO" id="GO:0005829">
    <property type="term" value="C:cytosol"/>
    <property type="evidence" value="ECO:0007669"/>
    <property type="project" value="TreeGrafter"/>
</dbReference>
<dbReference type="GO" id="GO:0051539">
    <property type="term" value="F:4 iron, 4 sulfur cluster binding"/>
    <property type="evidence" value="ECO:0007669"/>
    <property type="project" value="UniProtKB-UniRule"/>
</dbReference>
<dbReference type="GO" id="GO:0005524">
    <property type="term" value="F:ATP binding"/>
    <property type="evidence" value="ECO:0007669"/>
    <property type="project" value="UniProtKB-KW"/>
</dbReference>
<dbReference type="GO" id="GO:0140663">
    <property type="term" value="F:ATP-dependent FeS chaperone activity"/>
    <property type="evidence" value="ECO:0007669"/>
    <property type="project" value="InterPro"/>
</dbReference>
<dbReference type="GO" id="GO:0046872">
    <property type="term" value="F:metal ion binding"/>
    <property type="evidence" value="ECO:0007669"/>
    <property type="project" value="UniProtKB-KW"/>
</dbReference>
<dbReference type="GO" id="GO:0016226">
    <property type="term" value="P:iron-sulfur cluster assembly"/>
    <property type="evidence" value="ECO:0007669"/>
    <property type="project" value="UniProtKB-UniRule"/>
</dbReference>
<dbReference type="CDD" id="cd02037">
    <property type="entry name" value="Mrp_NBP35"/>
    <property type="match status" value="1"/>
</dbReference>
<dbReference type="FunFam" id="3.40.50.300:FF:000796">
    <property type="entry name" value="Cytosolic Fe-S cluster assembly factor NUBP2"/>
    <property type="match status" value="1"/>
</dbReference>
<dbReference type="Gene3D" id="3.40.50.300">
    <property type="entry name" value="P-loop containing nucleotide triphosphate hydrolases"/>
    <property type="match status" value="1"/>
</dbReference>
<dbReference type="HAMAP" id="MF_02040">
    <property type="entry name" value="Mrp_NBP35"/>
    <property type="match status" value="1"/>
</dbReference>
<dbReference type="HAMAP" id="MF_03039">
    <property type="entry name" value="NUBP2"/>
    <property type="match status" value="1"/>
</dbReference>
<dbReference type="InterPro" id="IPR000808">
    <property type="entry name" value="Mrp-like_CS"/>
</dbReference>
<dbReference type="InterPro" id="IPR019591">
    <property type="entry name" value="Mrp/NBP35_ATP-bd"/>
</dbReference>
<dbReference type="InterPro" id="IPR028600">
    <property type="entry name" value="NUBP2/Cfd1_eukaryotes"/>
</dbReference>
<dbReference type="InterPro" id="IPR027417">
    <property type="entry name" value="P-loop_NTPase"/>
</dbReference>
<dbReference type="InterPro" id="IPR033756">
    <property type="entry name" value="YlxH/NBP35"/>
</dbReference>
<dbReference type="PANTHER" id="PTHR23264:SF19">
    <property type="entry name" value="CYTOSOLIC FE-S CLUSTER ASSEMBLY FACTOR NUBP2"/>
    <property type="match status" value="1"/>
</dbReference>
<dbReference type="PANTHER" id="PTHR23264">
    <property type="entry name" value="NUCLEOTIDE-BINDING PROTEIN NBP35 YEAST -RELATED"/>
    <property type="match status" value="1"/>
</dbReference>
<dbReference type="Pfam" id="PF10609">
    <property type="entry name" value="ParA"/>
    <property type="match status" value="1"/>
</dbReference>
<dbReference type="SUPFAM" id="SSF52540">
    <property type="entry name" value="P-loop containing nucleoside triphosphate hydrolases"/>
    <property type="match status" value="1"/>
</dbReference>
<dbReference type="PROSITE" id="PS01215">
    <property type="entry name" value="MRP"/>
    <property type="match status" value="1"/>
</dbReference>
<proteinExistence type="inferred from homology"/>
<accession>B4IYG8</accession>
<organism>
    <name type="scientific">Drosophila grimshawi</name>
    <name type="common">Hawaiian fruit fly</name>
    <name type="synonym">Idiomyia grimshawi</name>
    <dbReference type="NCBI Taxonomy" id="7222"/>
    <lineage>
        <taxon>Eukaryota</taxon>
        <taxon>Metazoa</taxon>
        <taxon>Ecdysozoa</taxon>
        <taxon>Arthropoda</taxon>
        <taxon>Hexapoda</taxon>
        <taxon>Insecta</taxon>
        <taxon>Pterygota</taxon>
        <taxon>Neoptera</taxon>
        <taxon>Endopterygota</taxon>
        <taxon>Diptera</taxon>
        <taxon>Brachycera</taxon>
        <taxon>Muscomorpha</taxon>
        <taxon>Ephydroidea</taxon>
        <taxon>Drosophilidae</taxon>
        <taxon>Drosophila</taxon>
        <taxon>Hawaiian Drosophila</taxon>
    </lineage>
</organism>